<organism>
    <name type="scientific">Methanoculleus marisnigri (strain ATCC 35101 / DSM 1498 / JR1)</name>
    <dbReference type="NCBI Taxonomy" id="368407"/>
    <lineage>
        <taxon>Archaea</taxon>
        <taxon>Methanobacteriati</taxon>
        <taxon>Methanobacteriota</taxon>
        <taxon>Stenosarchaea group</taxon>
        <taxon>Methanomicrobia</taxon>
        <taxon>Methanomicrobiales</taxon>
        <taxon>Methanomicrobiaceae</taxon>
        <taxon>Methanoculleus</taxon>
    </lineage>
</organism>
<feature type="chain" id="PRO_0000335297" description="5'-nucleotidase SurE">
    <location>
        <begin position="1"/>
        <end position="263"/>
    </location>
</feature>
<feature type="binding site" evidence="1">
    <location>
        <position position="10"/>
    </location>
    <ligand>
        <name>a divalent metal cation</name>
        <dbReference type="ChEBI" id="CHEBI:60240"/>
    </ligand>
</feature>
<feature type="binding site" evidence="1">
    <location>
        <position position="11"/>
    </location>
    <ligand>
        <name>a divalent metal cation</name>
        <dbReference type="ChEBI" id="CHEBI:60240"/>
    </ligand>
</feature>
<feature type="binding site" evidence="1">
    <location>
        <position position="41"/>
    </location>
    <ligand>
        <name>a divalent metal cation</name>
        <dbReference type="ChEBI" id="CHEBI:60240"/>
    </ligand>
</feature>
<feature type="binding site" evidence="1">
    <location>
        <position position="95"/>
    </location>
    <ligand>
        <name>a divalent metal cation</name>
        <dbReference type="ChEBI" id="CHEBI:60240"/>
    </ligand>
</feature>
<protein>
    <recommendedName>
        <fullName evidence="1">5'-nucleotidase SurE</fullName>
        <ecNumber evidence="1">3.1.3.5</ecNumber>
    </recommendedName>
    <alternativeName>
        <fullName evidence="1">Nucleoside 5'-monophosphate phosphohydrolase</fullName>
    </alternativeName>
</protein>
<reference key="1">
    <citation type="journal article" date="2009" name="Stand. Genomic Sci.">
        <title>Complete genome sequence of Methanoculleus marisnigri Romesser et al. 1981 type strain JR1.</title>
        <authorList>
            <person name="Anderson I.J."/>
            <person name="Sieprawska-Lupa M."/>
            <person name="Lapidus A."/>
            <person name="Nolan M."/>
            <person name="Copeland A."/>
            <person name="Glavina Del Rio T."/>
            <person name="Tice H."/>
            <person name="Dalin E."/>
            <person name="Barry K."/>
            <person name="Saunders E."/>
            <person name="Han C."/>
            <person name="Brettin T."/>
            <person name="Detter J.C."/>
            <person name="Bruce D."/>
            <person name="Mikhailova N."/>
            <person name="Pitluck S."/>
            <person name="Hauser L."/>
            <person name="Land M."/>
            <person name="Lucas S."/>
            <person name="Richardson P."/>
            <person name="Whitman W.B."/>
            <person name="Kyrpides N.C."/>
        </authorList>
    </citation>
    <scope>NUCLEOTIDE SEQUENCE [LARGE SCALE GENOMIC DNA]</scope>
    <source>
        <strain>ATCC 35101 / DSM 1498 / JR1</strain>
    </source>
</reference>
<proteinExistence type="inferred from homology"/>
<dbReference type="EC" id="3.1.3.5" evidence="1"/>
<dbReference type="EMBL" id="CP000562">
    <property type="protein sequence ID" value="ABN57314.1"/>
    <property type="molecule type" value="Genomic_DNA"/>
</dbReference>
<dbReference type="RefSeq" id="WP_011844225.1">
    <property type="nucleotide sequence ID" value="NC_009051.1"/>
</dbReference>
<dbReference type="SMR" id="A3CVB4"/>
<dbReference type="STRING" id="368407.Memar_1385"/>
<dbReference type="GeneID" id="4846964"/>
<dbReference type="GeneID" id="76729456"/>
<dbReference type="KEGG" id="mem:Memar_1385"/>
<dbReference type="eggNOG" id="arCOG02303">
    <property type="taxonomic scope" value="Archaea"/>
</dbReference>
<dbReference type="HOGENOM" id="CLU_045192_1_3_2"/>
<dbReference type="OrthoDB" id="26873at2157"/>
<dbReference type="Proteomes" id="UP000002146">
    <property type="component" value="Chromosome"/>
</dbReference>
<dbReference type="GO" id="GO:0005737">
    <property type="term" value="C:cytoplasm"/>
    <property type="evidence" value="ECO:0007669"/>
    <property type="project" value="UniProtKB-SubCell"/>
</dbReference>
<dbReference type="GO" id="GO:0008253">
    <property type="term" value="F:5'-nucleotidase activity"/>
    <property type="evidence" value="ECO:0007669"/>
    <property type="project" value="UniProtKB-UniRule"/>
</dbReference>
<dbReference type="GO" id="GO:0046872">
    <property type="term" value="F:metal ion binding"/>
    <property type="evidence" value="ECO:0007669"/>
    <property type="project" value="UniProtKB-UniRule"/>
</dbReference>
<dbReference type="GO" id="GO:0000166">
    <property type="term" value="F:nucleotide binding"/>
    <property type="evidence" value="ECO:0007669"/>
    <property type="project" value="UniProtKB-KW"/>
</dbReference>
<dbReference type="Gene3D" id="3.40.1210.10">
    <property type="entry name" value="Survival protein SurE-like phosphatase/nucleotidase"/>
    <property type="match status" value="1"/>
</dbReference>
<dbReference type="HAMAP" id="MF_00060">
    <property type="entry name" value="SurE"/>
    <property type="match status" value="1"/>
</dbReference>
<dbReference type="InterPro" id="IPR030048">
    <property type="entry name" value="SurE"/>
</dbReference>
<dbReference type="InterPro" id="IPR002828">
    <property type="entry name" value="SurE-like_Pase/nucleotidase"/>
</dbReference>
<dbReference type="InterPro" id="IPR036523">
    <property type="entry name" value="SurE-like_sf"/>
</dbReference>
<dbReference type="NCBIfam" id="NF001491">
    <property type="entry name" value="PRK00346.2-1"/>
    <property type="match status" value="1"/>
</dbReference>
<dbReference type="NCBIfam" id="TIGR00087">
    <property type="entry name" value="surE"/>
    <property type="match status" value="1"/>
</dbReference>
<dbReference type="PANTHER" id="PTHR30457">
    <property type="entry name" value="5'-NUCLEOTIDASE SURE"/>
    <property type="match status" value="1"/>
</dbReference>
<dbReference type="PANTHER" id="PTHR30457:SF0">
    <property type="entry name" value="PHOSPHATASE, PUTATIVE (AFU_ORTHOLOGUE AFUA_4G01070)-RELATED"/>
    <property type="match status" value="1"/>
</dbReference>
<dbReference type="Pfam" id="PF01975">
    <property type="entry name" value="SurE"/>
    <property type="match status" value="1"/>
</dbReference>
<dbReference type="SUPFAM" id="SSF64167">
    <property type="entry name" value="SurE-like"/>
    <property type="match status" value="1"/>
</dbReference>
<gene>
    <name evidence="1" type="primary">surE</name>
    <name type="ordered locus">Memar_1385</name>
</gene>
<comment type="function">
    <text evidence="1">Nucleotidase that shows phosphatase activity on nucleoside 5'-monophosphates.</text>
</comment>
<comment type="catalytic activity">
    <reaction evidence="1">
        <text>a ribonucleoside 5'-phosphate + H2O = a ribonucleoside + phosphate</text>
        <dbReference type="Rhea" id="RHEA:12484"/>
        <dbReference type="ChEBI" id="CHEBI:15377"/>
        <dbReference type="ChEBI" id="CHEBI:18254"/>
        <dbReference type="ChEBI" id="CHEBI:43474"/>
        <dbReference type="ChEBI" id="CHEBI:58043"/>
        <dbReference type="EC" id="3.1.3.5"/>
    </reaction>
</comment>
<comment type="cofactor">
    <cofactor evidence="1">
        <name>a divalent metal cation</name>
        <dbReference type="ChEBI" id="CHEBI:60240"/>
    </cofactor>
    <text evidence="1">Binds 1 divalent metal cation per subunit.</text>
</comment>
<comment type="subcellular location">
    <subcellularLocation>
        <location evidence="1">Cytoplasm</location>
    </subcellularLocation>
</comment>
<comment type="similarity">
    <text evidence="1">Belongs to the SurE nucleotidase family.</text>
</comment>
<evidence type="ECO:0000255" key="1">
    <source>
        <dbReference type="HAMAP-Rule" id="MF_00060"/>
    </source>
</evidence>
<sequence>MKPKILLTNDDGITSTGLWAAYDALAPIADVTVVAPATQQSAVGRSISIFEPIRANQVTMNGVTAYSVGGKPTDAVIIGLFALRLNPDLVVSGVNIGENLSFESIMTSGTVGAALEAANQGVPSLAFSLQVEDQGDKFDDPSRIIDRYSDAKRVVRETCERVLANGFPGKAHVINVNIPARVRGGYEITRLAEKLFYTGVEERLDPRGRPYYWIDGPLYEDAEEGTDVHAVQRGNVSITPITLDCTAYAAADELKAIFDGMHI</sequence>
<keyword id="KW-0963">Cytoplasm</keyword>
<keyword id="KW-0378">Hydrolase</keyword>
<keyword id="KW-0479">Metal-binding</keyword>
<keyword id="KW-0547">Nucleotide-binding</keyword>
<name>SURE_METMJ</name>
<accession>A3CVB4</accession>